<evidence type="ECO:0000250" key="1"/>
<evidence type="ECO:0000250" key="2">
    <source>
        <dbReference type="UniProtKB" id="Q96PV7"/>
    </source>
</evidence>
<evidence type="ECO:0000255" key="3"/>
<evidence type="ECO:0000256" key="4">
    <source>
        <dbReference type="SAM" id="MobiDB-lite"/>
    </source>
</evidence>
<evidence type="ECO:0000303" key="5">
    <source>
    </source>
</evidence>
<evidence type="ECO:0000303" key="6">
    <source>
    </source>
</evidence>
<evidence type="ECO:0000303" key="7">
    <source>
    </source>
</evidence>
<evidence type="ECO:0000305" key="8"/>
<evidence type="ECO:0007744" key="9">
    <source>
    </source>
</evidence>
<name>F193B_MOUSE</name>
<sequence length="892" mass="95084">MTRRRSRPSGGAGRRERARAAGLQKPQAPEPQPPPPSLEAGAGAGPPEVPAELDCDGPREEEEPKLAPGPQVPPTSSQSVQTCCLLCHRERKGWEEGPSQNGLVLQGEKLPPDFMPKLVKNLLGEMPLWVCQSCRKSMEEEERQTGGDHAVAISLSHTSCKSQSCGGDSHSSSSSSSSSSSSSSSCHGNSGDWDPSSFLSAHKLSGLWNSPHSSGAVPGSSLGSPPAILGEAFPVSEHHQHSDLTAPPNSPTGPPPHPASLIPSHPGSFSSASYPPPLPTTPVAPFPAQASECPMAAATATHPSGPCQSPHPPSTSMPLLKMPPPLSGCSHPCSGHCSGHCGGPLLPPPSSQPLPSTHSRDPGCKGHKFAHSGLACEADEGLGEEEDSSSERSSCTSSSTHPRDGKFCDCCYCEFFGHNAPLAAPTSRNYTEIREKLRSRLTRRKEELPMKGGTLGGIPGEPAVDHRDVDELLEFINSTEPKVPNSARAAKRARHKLKKKEKEKARLATEALKQVNRVSGSQEPRPARERLLEWPDQELDRVNSFLSSRLQEIKSTVKDSLCASLSMCELSVESSGFKEGTVEAQTLTPSDLSGSSQKRPDINLDLSPLTLGSPQSHTLQAPSEPVPPWAERRDPHPPPWTEVRGPPPGIPENGLVRRLNTVPNLSRVIWVKTPKPGNPSSEESSKEVPSCKQELSEPVATGGKPKKSKRQGSQAKKTLASPAPWSPANLEASGAKSQVSSPKQPSKGSEPAKVGSGAEPGEGSPGSRPGPIQADSPKTDKKGSSWQNWPGGAKARTLEQESEQTPGPARPQSLSQGKGRSRRSRNKQEKSASSLDDVFLPKDLDGVEMDETDREVEYFKRFCLDSAKQTRQKVAVNWTNFSLKKTTPSTAQ</sequence>
<feature type="chain" id="PRO_0000344458" description="Protein FAM193B">
    <location>
        <begin position="1"/>
        <end position="892"/>
    </location>
</feature>
<feature type="region of interest" description="Disordered" evidence="4">
    <location>
        <begin position="1"/>
        <end position="78"/>
    </location>
</feature>
<feature type="region of interest" description="Disordered" evidence="4">
    <location>
        <begin position="164"/>
        <end position="192"/>
    </location>
</feature>
<feature type="region of interest" description="Disordered" evidence="4">
    <location>
        <begin position="237"/>
        <end position="321"/>
    </location>
</feature>
<feature type="region of interest" description="Disordered" evidence="4">
    <location>
        <begin position="379"/>
        <end position="403"/>
    </location>
</feature>
<feature type="region of interest" description="Disordered" evidence="4">
    <location>
        <begin position="587"/>
        <end position="655"/>
    </location>
</feature>
<feature type="region of interest" description="Disordered" evidence="4">
    <location>
        <begin position="671"/>
        <end position="837"/>
    </location>
</feature>
<feature type="coiled-coil region" evidence="3">
    <location>
        <begin position="485"/>
        <end position="517"/>
    </location>
</feature>
<feature type="compositionally biased region" description="Pro residues" evidence="4">
    <location>
        <begin position="28"/>
        <end position="37"/>
    </location>
</feature>
<feature type="compositionally biased region" description="Basic and acidic residues" evidence="4">
    <location>
        <begin position="56"/>
        <end position="65"/>
    </location>
</feature>
<feature type="compositionally biased region" description="Low complexity" evidence="4">
    <location>
        <begin position="169"/>
        <end position="185"/>
    </location>
</feature>
<feature type="compositionally biased region" description="Pro residues" evidence="4">
    <location>
        <begin position="248"/>
        <end position="258"/>
    </location>
</feature>
<feature type="compositionally biased region" description="Pro residues" evidence="4">
    <location>
        <begin position="274"/>
        <end position="285"/>
    </location>
</feature>
<feature type="compositionally biased region" description="Pro residues" evidence="4">
    <location>
        <begin position="309"/>
        <end position="321"/>
    </location>
</feature>
<feature type="compositionally biased region" description="Acidic residues" evidence="4">
    <location>
        <begin position="379"/>
        <end position="388"/>
    </location>
</feature>
<feature type="compositionally biased region" description="Low complexity" evidence="4">
    <location>
        <begin position="391"/>
        <end position="400"/>
    </location>
</feature>
<feature type="compositionally biased region" description="Polar residues" evidence="4">
    <location>
        <begin position="587"/>
        <end position="597"/>
    </location>
</feature>
<feature type="compositionally biased region" description="Polar residues" evidence="4">
    <location>
        <begin position="610"/>
        <end position="621"/>
    </location>
</feature>
<feature type="compositionally biased region" description="Pro residues" evidence="4">
    <location>
        <begin position="637"/>
        <end position="650"/>
    </location>
</feature>
<feature type="compositionally biased region" description="Low complexity" evidence="4">
    <location>
        <begin position="736"/>
        <end position="757"/>
    </location>
</feature>
<feature type="modified residue" description="Phosphoserine" evidence="9">
    <location>
        <position position="764"/>
    </location>
</feature>
<feature type="modified residue" description="Phosphoserine" evidence="9">
    <location>
        <position position="776"/>
    </location>
</feature>
<feature type="modified residue" description="Phosphoserine" evidence="2">
    <location>
        <position position="882"/>
    </location>
</feature>
<feature type="splice variant" id="VSP_034781" description="In isoform 3." evidence="6 7">
    <location>
        <begin position="1"/>
        <end position="449"/>
    </location>
</feature>
<feature type="splice variant" id="VSP_034782" description="In isoform 2." evidence="5 6 7">
    <location>
        <begin position="1"/>
        <end position="114"/>
    </location>
</feature>
<gene>
    <name type="primary">Fam193b</name>
    <name type="synonym">Kiaa1931</name>
</gene>
<organism>
    <name type="scientific">Mus musculus</name>
    <name type="common">Mouse</name>
    <dbReference type="NCBI Taxonomy" id="10090"/>
    <lineage>
        <taxon>Eukaryota</taxon>
        <taxon>Metazoa</taxon>
        <taxon>Chordata</taxon>
        <taxon>Craniata</taxon>
        <taxon>Vertebrata</taxon>
        <taxon>Euteleostomi</taxon>
        <taxon>Mammalia</taxon>
        <taxon>Eutheria</taxon>
        <taxon>Euarchontoglires</taxon>
        <taxon>Glires</taxon>
        <taxon>Rodentia</taxon>
        <taxon>Myomorpha</taxon>
        <taxon>Muroidea</taxon>
        <taxon>Muridae</taxon>
        <taxon>Murinae</taxon>
        <taxon>Mus</taxon>
        <taxon>Mus</taxon>
    </lineage>
</organism>
<accession>Q3U2K0</accession>
<accession>Q69Z63</accession>
<accession>Q8K1B4</accession>
<accession>Q8VCA1</accession>
<reference key="1">
    <citation type="journal article" date="2004" name="DNA Res.">
        <title>Prediction of the coding sequences of mouse homologues of KIAA gene: IV. The complete nucleotide sequences of 500 mouse KIAA-homologous cDNAs identified by screening of terminal sequences of cDNA clones randomly sampled from size-fractionated libraries.</title>
        <authorList>
            <person name="Okazaki N."/>
            <person name="Kikuno R."/>
            <person name="Ohara R."/>
            <person name="Inamoto S."/>
            <person name="Koseki H."/>
            <person name="Hiraoka S."/>
            <person name="Saga Y."/>
            <person name="Seino S."/>
            <person name="Nishimura M."/>
            <person name="Kaisho T."/>
            <person name="Hoshino K."/>
            <person name="Kitamura H."/>
            <person name="Nagase T."/>
            <person name="Ohara O."/>
            <person name="Koga H."/>
        </authorList>
    </citation>
    <scope>NUCLEOTIDE SEQUENCE [LARGE SCALE MRNA] (ISOFORM 2)</scope>
</reference>
<reference key="2">
    <citation type="journal article" date="2005" name="Science">
        <title>The transcriptional landscape of the mammalian genome.</title>
        <authorList>
            <person name="Carninci P."/>
            <person name="Kasukawa T."/>
            <person name="Katayama S."/>
            <person name="Gough J."/>
            <person name="Frith M.C."/>
            <person name="Maeda N."/>
            <person name="Oyama R."/>
            <person name="Ravasi T."/>
            <person name="Lenhard B."/>
            <person name="Wells C."/>
            <person name="Kodzius R."/>
            <person name="Shimokawa K."/>
            <person name="Bajic V.B."/>
            <person name="Brenner S.E."/>
            <person name="Batalov S."/>
            <person name="Forrest A.R."/>
            <person name="Zavolan M."/>
            <person name="Davis M.J."/>
            <person name="Wilming L.G."/>
            <person name="Aidinis V."/>
            <person name="Allen J.E."/>
            <person name="Ambesi-Impiombato A."/>
            <person name="Apweiler R."/>
            <person name="Aturaliya R.N."/>
            <person name="Bailey T.L."/>
            <person name="Bansal M."/>
            <person name="Baxter L."/>
            <person name="Beisel K.W."/>
            <person name="Bersano T."/>
            <person name="Bono H."/>
            <person name="Chalk A.M."/>
            <person name="Chiu K.P."/>
            <person name="Choudhary V."/>
            <person name="Christoffels A."/>
            <person name="Clutterbuck D.R."/>
            <person name="Crowe M.L."/>
            <person name="Dalla E."/>
            <person name="Dalrymple B.P."/>
            <person name="de Bono B."/>
            <person name="Della Gatta G."/>
            <person name="di Bernardo D."/>
            <person name="Down T."/>
            <person name="Engstrom P."/>
            <person name="Fagiolini M."/>
            <person name="Faulkner G."/>
            <person name="Fletcher C.F."/>
            <person name="Fukushima T."/>
            <person name="Furuno M."/>
            <person name="Futaki S."/>
            <person name="Gariboldi M."/>
            <person name="Georgii-Hemming P."/>
            <person name="Gingeras T.R."/>
            <person name="Gojobori T."/>
            <person name="Green R.E."/>
            <person name="Gustincich S."/>
            <person name="Harbers M."/>
            <person name="Hayashi Y."/>
            <person name="Hensch T.K."/>
            <person name="Hirokawa N."/>
            <person name="Hill D."/>
            <person name="Huminiecki L."/>
            <person name="Iacono M."/>
            <person name="Ikeo K."/>
            <person name="Iwama A."/>
            <person name="Ishikawa T."/>
            <person name="Jakt M."/>
            <person name="Kanapin A."/>
            <person name="Katoh M."/>
            <person name="Kawasawa Y."/>
            <person name="Kelso J."/>
            <person name="Kitamura H."/>
            <person name="Kitano H."/>
            <person name="Kollias G."/>
            <person name="Krishnan S.P."/>
            <person name="Kruger A."/>
            <person name="Kummerfeld S.K."/>
            <person name="Kurochkin I.V."/>
            <person name="Lareau L.F."/>
            <person name="Lazarevic D."/>
            <person name="Lipovich L."/>
            <person name="Liu J."/>
            <person name="Liuni S."/>
            <person name="McWilliam S."/>
            <person name="Madan Babu M."/>
            <person name="Madera M."/>
            <person name="Marchionni L."/>
            <person name="Matsuda H."/>
            <person name="Matsuzawa S."/>
            <person name="Miki H."/>
            <person name="Mignone F."/>
            <person name="Miyake S."/>
            <person name="Morris K."/>
            <person name="Mottagui-Tabar S."/>
            <person name="Mulder N."/>
            <person name="Nakano N."/>
            <person name="Nakauchi H."/>
            <person name="Ng P."/>
            <person name="Nilsson R."/>
            <person name="Nishiguchi S."/>
            <person name="Nishikawa S."/>
            <person name="Nori F."/>
            <person name="Ohara O."/>
            <person name="Okazaki Y."/>
            <person name="Orlando V."/>
            <person name="Pang K.C."/>
            <person name="Pavan W.J."/>
            <person name="Pavesi G."/>
            <person name="Pesole G."/>
            <person name="Petrovsky N."/>
            <person name="Piazza S."/>
            <person name="Reed J."/>
            <person name="Reid J.F."/>
            <person name="Ring B.Z."/>
            <person name="Ringwald M."/>
            <person name="Rost B."/>
            <person name="Ruan Y."/>
            <person name="Salzberg S.L."/>
            <person name="Sandelin A."/>
            <person name="Schneider C."/>
            <person name="Schoenbach C."/>
            <person name="Sekiguchi K."/>
            <person name="Semple C.A."/>
            <person name="Seno S."/>
            <person name="Sessa L."/>
            <person name="Sheng Y."/>
            <person name="Shibata Y."/>
            <person name="Shimada H."/>
            <person name="Shimada K."/>
            <person name="Silva D."/>
            <person name="Sinclair B."/>
            <person name="Sperling S."/>
            <person name="Stupka E."/>
            <person name="Sugiura K."/>
            <person name="Sultana R."/>
            <person name="Takenaka Y."/>
            <person name="Taki K."/>
            <person name="Tammoja K."/>
            <person name="Tan S.L."/>
            <person name="Tang S."/>
            <person name="Taylor M.S."/>
            <person name="Tegner J."/>
            <person name="Teichmann S.A."/>
            <person name="Ueda H.R."/>
            <person name="van Nimwegen E."/>
            <person name="Verardo R."/>
            <person name="Wei C.L."/>
            <person name="Yagi K."/>
            <person name="Yamanishi H."/>
            <person name="Zabarovsky E."/>
            <person name="Zhu S."/>
            <person name="Zimmer A."/>
            <person name="Hide W."/>
            <person name="Bult C."/>
            <person name="Grimmond S.M."/>
            <person name="Teasdale R.D."/>
            <person name="Liu E.T."/>
            <person name="Brusic V."/>
            <person name="Quackenbush J."/>
            <person name="Wahlestedt C."/>
            <person name="Mattick J.S."/>
            <person name="Hume D.A."/>
            <person name="Kai C."/>
            <person name="Sasaki D."/>
            <person name="Tomaru Y."/>
            <person name="Fukuda S."/>
            <person name="Kanamori-Katayama M."/>
            <person name="Suzuki M."/>
            <person name="Aoki J."/>
            <person name="Arakawa T."/>
            <person name="Iida J."/>
            <person name="Imamura K."/>
            <person name="Itoh M."/>
            <person name="Kato T."/>
            <person name="Kawaji H."/>
            <person name="Kawagashira N."/>
            <person name="Kawashima T."/>
            <person name="Kojima M."/>
            <person name="Kondo S."/>
            <person name="Konno H."/>
            <person name="Nakano K."/>
            <person name="Ninomiya N."/>
            <person name="Nishio T."/>
            <person name="Okada M."/>
            <person name="Plessy C."/>
            <person name="Shibata K."/>
            <person name="Shiraki T."/>
            <person name="Suzuki S."/>
            <person name="Tagami M."/>
            <person name="Waki K."/>
            <person name="Watahiki A."/>
            <person name="Okamura-Oho Y."/>
            <person name="Suzuki H."/>
            <person name="Kawai J."/>
            <person name="Hayashizaki Y."/>
        </authorList>
    </citation>
    <scope>NUCLEOTIDE SEQUENCE [LARGE SCALE MRNA] (ISOFORMS 2 AND 3)</scope>
    <source>
        <strain>NOD</strain>
    </source>
</reference>
<reference key="3">
    <citation type="journal article" date="2009" name="PLoS Biol.">
        <title>Lineage-specific biology revealed by a finished genome assembly of the mouse.</title>
        <authorList>
            <person name="Church D.M."/>
            <person name="Goodstadt L."/>
            <person name="Hillier L.W."/>
            <person name="Zody M.C."/>
            <person name="Goldstein S."/>
            <person name="She X."/>
            <person name="Bult C.J."/>
            <person name="Agarwala R."/>
            <person name="Cherry J.L."/>
            <person name="DiCuccio M."/>
            <person name="Hlavina W."/>
            <person name="Kapustin Y."/>
            <person name="Meric P."/>
            <person name="Maglott D."/>
            <person name="Birtle Z."/>
            <person name="Marques A.C."/>
            <person name="Graves T."/>
            <person name="Zhou S."/>
            <person name="Teague B."/>
            <person name="Potamousis K."/>
            <person name="Churas C."/>
            <person name="Place M."/>
            <person name="Herschleb J."/>
            <person name="Runnheim R."/>
            <person name="Forrest D."/>
            <person name="Amos-Landgraf J."/>
            <person name="Schwartz D.C."/>
            <person name="Cheng Z."/>
            <person name="Lindblad-Toh K."/>
            <person name="Eichler E.E."/>
            <person name="Ponting C.P."/>
        </authorList>
    </citation>
    <scope>NUCLEOTIDE SEQUENCE [LARGE SCALE GENOMIC DNA]</scope>
    <source>
        <strain>C57BL/6J</strain>
    </source>
</reference>
<reference key="4">
    <citation type="journal article" date="2004" name="Genome Res.">
        <title>The status, quality, and expansion of the NIH full-length cDNA project: the Mammalian Gene Collection (MGC).</title>
        <authorList>
            <consortium name="The MGC Project Team"/>
        </authorList>
    </citation>
    <scope>NUCLEOTIDE SEQUENCE [LARGE SCALE MRNA] (ISOFORMS 2 AND 3)</scope>
    <source>
        <strain>FVB/N</strain>
        <tissue>Brain</tissue>
        <tissue>Eye</tissue>
        <tissue>Kidney</tissue>
        <tissue>Mammary tumor</tissue>
    </source>
</reference>
<reference key="5">
    <citation type="journal article" date="2010" name="Cell">
        <title>A tissue-specific atlas of mouse protein phosphorylation and expression.</title>
        <authorList>
            <person name="Huttlin E.L."/>
            <person name="Jedrychowski M.P."/>
            <person name="Elias J.E."/>
            <person name="Goswami T."/>
            <person name="Rad R."/>
            <person name="Beausoleil S.A."/>
            <person name="Villen J."/>
            <person name="Haas W."/>
            <person name="Sowa M.E."/>
            <person name="Gygi S.P."/>
        </authorList>
    </citation>
    <scope>PHOSPHORYLATION [LARGE SCALE ANALYSIS] AT SER-764 AND SER-776</scope>
    <scope>IDENTIFICATION BY MASS SPECTROMETRY [LARGE SCALE ANALYSIS]</scope>
    <source>
        <tissue>Brain</tissue>
        <tissue>Lung</tissue>
    </source>
</reference>
<proteinExistence type="evidence at protein level"/>
<dbReference type="EMBL" id="AK173303">
    <property type="protein sequence ID" value="BAD32581.1"/>
    <property type="status" value="ALT_INIT"/>
    <property type="molecule type" value="mRNA"/>
</dbReference>
<dbReference type="EMBL" id="AK040568">
    <property type="protein sequence ID" value="BAC30629.1"/>
    <property type="molecule type" value="mRNA"/>
</dbReference>
<dbReference type="EMBL" id="AK155237">
    <property type="protein sequence ID" value="BAE33140.1"/>
    <property type="molecule type" value="mRNA"/>
</dbReference>
<dbReference type="EMBL" id="AC126408">
    <property type="status" value="NOT_ANNOTATED_CDS"/>
    <property type="molecule type" value="Genomic_DNA"/>
</dbReference>
<dbReference type="EMBL" id="BC021381">
    <property type="protein sequence ID" value="AAH21381.1"/>
    <property type="molecule type" value="mRNA"/>
</dbReference>
<dbReference type="EMBL" id="BC023015">
    <property type="protein sequence ID" value="AAH23015.1"/>
    <property type="molecule type" value="mRNA"/>
</dbReference>
<dbReference type="EMBL" id="BC025483">
    <property type="protein sequence ID" value="AAH25483.2"/>
    <property type="status" value="ALT_SEQ"/>
    <property type="molecule type" value="mRNA"/>
</dbReference>
<dbReference type="CCDS" id="CCDS36678.1">
    <molecule id="Q3U2K0-2"/>
</dbReference>
<dbReference type="RefSeq" id="NP_001395574.1">
    <molecule id="Q3U2K0-1"/>
    <property type="nucleotide sequence ID" value="NM_001408645.1"/>
</dbReference>
<dbReference type="RefSeq" id="NP_001395577.1">
    <molecule id="Q3U2K0-2"/>
    <property type="nucleotide sequence ID" value="NM_001408648.1"/>
</dbReference>
<dbReference type="RefSeq" id="NP_001395578.1">
    <molecule id="Q3U2K0-2"/>
    <property type="nucleotide sequence ID" value="NM_001408649.1"/>
</dbReference>
<dbReference type="RefSeq" id="NP_001395583.1">
    <molecule id="Q3U2K0-3"/>
    <property type="nucleotide sequence ID" value="NM_001408654.1"/>
</dbReference>
<dbReference type="RefSeq" id="NP_001395584.1">
    <molecule id="Q3U2K0-3"/>
    <property type="nucleotide sequence ID" value="NM_001408655.1"/>
</dbReference>
<dbReference type="RefSeq" id="NP_001395585.1">
    <molecule id="Q3U2K0-3"/>
    <property type="nucleotide sequence ID" value="NM_001408656.1"/>
</dbReference>
<dbReference type="RefSeq" id="NP_001395586.1">
    <molecule id="Q3U2K0-3"/>
    <property type="nucleotide sequence ID" value="NM_001408657.1"/>
</dbReference>
<dbReference type="RefSeq" id="NP_001395587.1">
    <molecule id="Q3U2K0-3"/>
    <property type="nucleotide sequence ID" value="NM_001408658.1"/>
</dbReference>
<dbReference type="RefSeq" id="NP_663357.2">
    <molecule id="Q3U2K0-2"/>
    <property type="nucleotide sequence ID" value="NM_145382.5"/>
</dbReference>
<dbReference type="RefSeq" id="XP_006517257.1">
    <property type="nucleotide sequence ID" value="XM_006517194.3"/>
</dbReference>
<dbReference type="RefSeq" id="XP_006517260.1">
    <property type="nucleotide sequence ID" value="XM_006517197.1"/>
</dbReference>
<dbReference type="RefSeq" id="XP_011242807.1">
    <property type="nucleotide sequence ID" value="XM_011244505.1"/>
</dbReference>
<dbReference type="RefSeq" id="XP_036013863.1">
    <molecule id="Q3U2K0-3"/>
    <property type="nucleotide sequence ID" value="XM_036157970.1"/>
</dbReference>
<dbReference type="SMR" id="Q3U2K0"/>
<dbReference type="FunCoup" id="Q3U2K0">
    <property type="interactions" value="3168"/>
</dbReference>
<dbReference type="STRING" id="10090.ENSMUSP00000021957"/>
<dbReference type="GlyGen" id="Q3U2K0">
    <property type="glycosylation" value="1 site, 1 N-linked glycan (1 site)"/>
</dbReference>
<dbReference type="iPTMnet" id="Q3U2K0"/>
<dbReference type="PhosphoSitePlus" id="Q3U2K0"/>
<dbReference type="PaxDb" id="10090-ENSMUSP00000021957"/>
<dbReference type="PeptideAtlas" id="Q3U2K0"/>
<dbReference type="ProteomicsDB" id="275720">
    <molecule id="Q3U2K0-1"/>
</dbReference>
<dbReference type="ProteomicsDB" id="275721">
    <molecule id="Q3U2K0-2"/>
</dbReference>
<dbReference type="ProteomicsDB" id="275722">
    <molecule id="Q3U2K0-3"/>
</dbReference>
<dbReference type="Pumba" id="Q3U2K0"/>
<dbReference type="Antibodypedia" id="29329">
    <property type="antibodies" value="33 antibodies from 17 providers"/>
</dbReference>
<dbReference type="DNASU" id="212483"/>
<dbReference type="Ensembl" id="ENSMUST00000021957.8">
    <molecule id="Q3U2K0-2"/>
    <property type="protein sequence ID" value="ENSMUSP00000021957.7"/>
    <property type="gene ID" value="ENSMUSG00000021495.11"/>
</dbReference>
<dbReference type="GeneID" id="212483"/>
<dbReference type="KEGG" id="mmu:212483"/>
<dbReference type="UCSC" id="uc007qrp.2">
    <molecule id="Q3U2K0-3"/>
    <property type="organism name" value="mouse"/>
</dbReference>
<dbReference type="UCSC" id="uc011yzv.1">
    <molecule id="Q3U2K0-1"/>
    <property type="organism name" value="mouse"/>
</dbReference>
<dbReference type="AGR" id="MGI:2385851"/>
<dbReference type="CTD" id="54540"/>
<dbReference type="MGI" id="MGI:2385851">
    <property type="gene designation" value="Fam193b"/>
</dbReference>
<dbReference type="VEuPathDB" id="HostDB:ENSMUSG00000021495"/>
<dbReference type="eggNOG" id="ENOG502QV04">
    <property type="taxonomic scope" value="Eukaryota"/>
</dbReference>
<dbReference type="GeneTree" id="ENSGT00390000000973"/>
<dbReference type="HOGENOM" id="CLU_012556_0_0_1"/>
<dbReference type="InParanoid" id="Q3U2K0"/>
<dbReference type="OrthoDB" id="10044608at2759"/>
<dbReference type="PhylomeDB" id="Q3U2K0"/>
<dbReference type="TreeFam" id="TF330223"/>
<dbReference type="BioGRID-ORCS" id="212483">
    <property type="hits" value="5 hits in 77 CRISPR screens"/>
</dbReference>
<dbReference type="ChiTaRS" id="Fam193b">
    <property type="organism name" value="mouse"/>
</dbReference>
<dbReference type="PRO" id="PR:Q3U2K0"/>
<dbReference type="Proteomes" id="UP000000589">
    <property type="component" value="Chromosome 13"/>
</dbReference>
<dbReference type="RNAct" id="Q3U2K0">
    <property type="molecule type" value="protein"/>
</dbReference>
<dbReference type="Bgee" id="ENSMUSG00000021495">
    <property type="expression patterns" value="Expressed in retinal neural layer and 253 other cell types or tissues"/>
</dbReference>
<dbReference type="ExpressionAtlas" id="Q3U2K0">
    <property type="expression patterns" value="baseline and differential"/>
</dbReference>
<dbReference type="GO" id="GO:0005737">
    <property type="term" value="C:cytoplasm"/>
    <property type="evidence" value="ECO:0000314"/>
    <property type="project" value="MGI"/>
</dbReference>
<dbReference type="GO" id="GO:0005634">
    <property type="term" value="C:nucleus"/>
    <property type="evidence" value="ECO:0000250"/>
    <property type="project" value="UniProtKB"/>
</dbReference>
<dbReference type="InterPro" id="IPR029717">
    <property type="entry name" value="FAM193"/>
</dbReference>
<dbReference type="InterPro" id="IPR031802">
    <property type="entry name" value="FAM193_C"/>
</dbReference>
<dbReference type="PANTHER" id="PTHR15109">
    <property type="entry name" value="AGAP004327-PA"/>
    <property type="match status" value="1"/>
</dbReference>
<dbReference type="PANTHER" id="PTHR15109:SF3">
    <property type="entry name" value="PROTEIN FAM193B"/>
    <property type="match status" value="1"/>
</dbReference>
<dbReference type="Pfam" id="PF15914">
    <property type="entry name" value="FAM193_C"/>
    <property type="match status" value="1"/>
</dbReference>
<keyword id="KW-0025">Alternative splicing</keyword>
<keyword id="KW-0175">Coiled coil</keyword>
<keyword id="KW-0963">Cytoplasm</keyword>
<keyword id="KW-0539">Nucleus</keyword>
<keyword id="KW-0597">Phosphoprotein</keyword>
<keyword id="KW-1185">Reference proteome</keyword>
<comment type="subcellular location">
    <subcellularLocation>
        <location evidence="1">Cytoplasm</location>
    </subcellularLocation>
    <subcellularLocation>
        <location evidence="1">Nucleus</location>
    </subcellularLocation>
    <text evidence="1">Partly colocalized with an endoplasmic reticulum marker, HSP90B1. Shuttles between nucleus and cytoplasm (By similarity).</text>
</comment>
<comment type="alternative products">
    <event type="alternative splicing"/>
    <isoform>
        <id>Q3U2K0-1</id>
        <name>1</name>
        <sequence type="displayed"/>
    </isoform>
    <isoform>
        <id>Q3U2K0-2</id>
        <name>2</name>
        <sequence type="described" ref="VSP_034782"/>
    </isoform>
    <isoform>
        <id>Q3U2K0-3</id>
        <name>3</name>
        <sequence type="described" ref="VSP_034781"/>
    </isoform>
</comment>
<comment type="similarity">
    <text evidence="8">Belongs to the FAM193 family.</text>
</comment>
<comment type="sequence caution" evidence="8">
    <conflict type="erroneous termination">
        <sequence resource="EMBL-CDS" id="AAH25483"/>
    </conflict>
    <text>Truncated C-terminus.</text>
</comment>
<comment type="sequence caution" evidence="8">
    <conflict type="erroneous initiation">
        <sequence resource="EMBL-CDS" id="BAD32581"/>
    </conflict>
</comment>
<protein>
    <recommendedName>
        <fullName>Protein FAM193B</fullName>
    </recommendedName>
</protein>